<gene>
    <name type="primary">UGT90A2</name>
    <name type="ordered locus">At1g10400</name>
    <name type="ORF">F14N23.30</name>
</gene>
<evidence type="ECO:0000250" key="1"/>
<evidence type="ECO:0000305" key="2"/>
<comment type="similarity">
    <text evidence="2">Belongs to the UDP-glycosyltransferase family.</text>
</comment>
<comment type="sequence caution" evidence="2">
    <conflict type="erroneous initiation">
        <sequence resource="EMBL-CDS" id="BAC41951"/>
    </conflict>
    <text>Truncated N-terminus.</text>
</comment>
<name>U90A2_ARATH</name>
<dbReference type="EC" id="2.4.1.-"/>
<dbReference type="EMBL" id="AC005489">
    <property type="protein sequence ID" value="AAD32892.1"/>
    <property type="molecule type" value="Genomic_DNA"/>
</dbReference>
<dbReference type="EMBL" id="CP002684">
    <property type="protein sequence ID" value="AEE28576.1"/>
    <property type="molecule type" value="Genomic_DNA"/>
</dbReference>
<dbReference type="EMBL" id="AK117278">
    <property type="protein sequence ID" value="BAC41951.1"/>
    <property type="status" value="ALT_INIT"/>
    <property type="molecule type" value="mRNA"/>
</dbReference>
<dbReference type="RefSeq" id="NP_172511.3">
    <property type="nucleotide sequence ID" value="NM_100915.4"/>
</dbReference>
<dbReference type="SMR" id="Q9SY84"/>
<dbReference type="FunCoup" id="Q9SY84">
    <property type="interactions" value="110"/>
</dbReference>
<dbReference type="STRING" id="3702.Q9SY84"/>
<dbReference type="CAZy" id="GT1">
    <property type="family name" value="Glycosyltransferase Family 1"/>
</dbReference>
<dbReference type="PaxDb" id="3702-AT1G10400.1"/>
<dbReference type="ProteomicsDB" id="228687"/>
<dbReference type="EnsemblPlants" id="AT1G10400.1">
    <property type="protein sequence ID" value="AT1G10400.1"/>
    <property type="gene ID" value="AT1G10400"/>
</dbReference>
<dbReference type="GeneID" id="837580"/>
<dbReference type="Gramene" id="AT1G10400.1">
    <property type="protein sequence ID" value="AT1G10400.1"/>
    <property type="gene ID" value="AT1G10400"/>
</dbReference>
<dbReference type="KEGG" id="ath:AT1G10400"/>
<dbReference type="Araport" id="AT1G10400"/>
<dbReference type="TAIR" id="AT1G10400"/>
<dbReference type="eggNOG" id="KOG1192">
    <property type="taxonomic scope" value="Eukaryota"/>
</dbReference>
<dbReference type="HOGENOM" id="CLU_001724_0_1_1"/>
<dbReference type="InParanoid" id="Q9SY84"/>
<dbReference type="OMA" id="DAKMGMA"/>
<dbReference type="PhylomeDB" id="Q9SY84"/>
<dbReference type="BioCyc" id="ARA:AT1G10400-MONOMER"/>
<dbReference type="PRO" id="PR:Q9SY84"/>
<dbReference type="Proteomes" id="UP000006548">
    <property type="component" value="Chromosome 1"/>
</dbReference>
<dbReference type="ExpressionAtlas" id="Q9SY84">
    <property type="expression patterns" value="baseline and differential"/>
</dbReference>
<dbReference type="GO" id="GO:0046527">
    <property type="term" value="F:glucosyltransferase activity"/>
    <property type="evidence" value="ECO:0007669"/>
    <property type="project" value="UniProtKB-ARBA"/>
</dbReference>
<dbReference type="GO" id="GO:0008194">
    <property type="term" value="F:UDP-glycosyltransferase activity"/>
    <property type="evidence" value="ECO:0007669"/>
    <property type="project" value="InterPro"/>
</dbReference>
<dbReference type="CDD" id="cd03784">
    <property type="entry name" value="GT1_Gtf-like"/>
    <property type="match status" value="1"/>
</dbReference>
<dbReference type="FunFam" id="3.40.50.2000:FF:000107">
    <property type="entry name" value="Glycosyltransferase"/>
    <property type="match status" value="1"/>
</dbReference>
<dbReference type="FunFam" id="3.40.50.2000:FF:000301">
    <property type="entry name" value="Glycosyltransferase"/>
    <property type="match status" value="1"/>
</dbReference>
<dbReference type="Gene3D" id="3.40.50.2000">
    <property type="entry name" value="Glycogen Phosphorylase B"/>
    <property type="match status" value="2"/>
</dbReference>
<dbReference type="InterPro" id="IPR002999">
    <property type="entry name" value="Tudor"/>
</dbReference>
<dbReference type="InterPro" id="IPR002213">
    <property type="entry name" value="UDP_glucos_trans"/>
</dbReference>
<dbReference type="InterPro" id="IPR035595">
    <property type="entry name" value="UDP_glycos_trans_CS"/>
</dbReference>
<dbReference type="PANTHER" id="PTHR48047">
    <property type="entry name" value="GLYCOSYLTRANSFERASE"/>
    <property type="match status" value="1"/>
</dbReference>
<dbReference type="PANTHER" id="PTHR48047:SF117">
    <property type="entry name" value="UDP-GLYCOSYLTRANSFERASE 90A2"/>
    <property type="match status" value="1"/>
</dbReference>
<dbReference type="Pfam" id="PF00201">
    <property type="entry name" value="UDPGT"/>
    <property type="match status" value="1"/>
</dbReference>
<dbReference type="SUPFAM" id="SSF53756">
    <property type="entry name" value="UDP-Glycosyltransferase/glycogen phosphorylase"/>
    <property type="match status" value="1"/>
</dbReference>
<dbReference type="PROSITE" id="PS00375">
    <property type="entry name" value="UDPGT"/>
    <property type="match status" value="1"/>
</dbReference>
<accession>Q9SY84</accession>
<accession>Q8GZ08</accession>
<protein>
    <recommendedName>
        <fullName>UDP-glycosyltransferase 90A2</fullName>
        <ecNumber>2.4.1.-</ecNumber>
    </recommendedName>
</protein>
<organism>
    <name type="scientific">Arabidopsis thaliana</name>
    <name type="common">Mouse-ear cress</name>
    <dbReference type="NCBI Taxonomy" id="3702"/>
    <lineage>
        <taxon>Eukaryota</taxon>
        <taxon>Viridiplantae</taxon>
        <taxon>Streptophyta</taxon>
        <taxon>Embryophyta</taxon>
        <taxon>Tracheophyta</taxon>
        <taxon>Spermatophyta</taxon>
        <taxon>Magnoliopsida</taxon>
        <taxon>eudicotyledons</taxon>
        <taxon>Gunneridae</taxon>
        <taxon>Pentapetalae</taxon>
        <taxon>rosids</taxon>
        <taxon>malvids</taxon>
        <taxon>Brassicales</taxon>
        <taxon>Brassicaceae</taxon>
        <taxon>Camelineae</taxon>
        <taxon>Arabidopsis</taxon>
    </lineage>
</organism>
<proteinExistence type="evidence at transcript level"/>
<keyword id="KW-0328">Glycosyltransferase</keyword>
<keyword id="KW-1185">Reference proteome</keyword>
<keyword id="KW-0808">Transferase</keyword>
<sequence>MELEKVHVVLFPYLSKGHMIPMLQLARLLLSHSFAGDISVTVFTTPLNRPFIVDSLSGTKATIVDVPFPDNVPEIPPGVECTDKLPALSSSLFVPFTRATKSMQADFERELMSLPRVSFMVSDGFLWWTQESARKLGFPRLVFFGMNCASTVICDSVFQNQLLSNVKSETEPVSVPEFPWIKVRKCDFVKDMFDPKTTTDPGFKLILDQVTSMNQSQGIIFNTFDDLEPVFIDFYKRKRKLKLWAVGPLCYVNNFLDDEVEEKVKPSWMKWLDEKRDKGCNVLYVAFGSQAEISREQLEEIALGLEESKVNFLWVVKGNEIGKGFEERVGERGMMVRDEWVDQRKILEHESVRGFLSHCGWNSLTESICSEVPILAFPLAAEQPLNAILVVEELRVAERVVAASEGVVRREEIAEKVKELMEGEKGKELRRNVEAYGKMAKKALEEGIGSSRKNLDNLINEFCNNGT</sequence>
<feature type="chain" id="PRO_0000409140" description="UDP-glycosyltransferase 90A2">
    <location>
        <begin position="1"/>
        <end position="467"/>
    </location>
</feature>
<feature type="binding site" evidence="1">
    <location>
        <position position="289"/>
    </location>
    <ligand>
        <name>UDP-alpha-D-glucose</name>
        <dbReference type="ChEBI" id="CHEBI:58885"/>
    </ligand>
</feature>
<feature type="binding site" evidence="1">
    <location>
        <begin position="341"/>
        <end position="343"/>
    </location>
    <ligand>
        <name>UDP-alpha-D-glucose</name>
        <dbReference type="ChEBI" id="CHEBI:58885"/>
    </ligand>
</feature>
<feature type="binding site" evidence="1">
    <location>
        <begin position="358"/>
        <end position="366"/>
    </location>
    <ligand>
        <name>UDP-alpha-D-glucose</name>
        <dbReference type="ChEBI" id="CHEBI:58885"/>
    </ligand>
</feature>
<feature type="binding site" evidence="1">
    <location>
        <begin position="380"/>
        <end position="383"/>
    </location>
    <ligand>
        <name>UDP-alpha-D-glucose</name>
        <dbReference type="ChEBI" id="CHEBI:58885"/>
    </ligand>
</feature>
<feature type="sequence conflict" description="In Ref. 3; BAC41951." evidence="2" ref="3">
    <original>D</original>
    <variation>G</variation>
    <location>
        <position position="123"/>
    </location>
</feature>
<feature type="sequence conflict" description="In Ref. 3; BAC41951." evidence="2" ref="3">
    <original>E</original>
    <variation>G</variation>
    <location>
        <position position="382"/>
    </location>
</feature>
<reference key="1">
    <citation type="journal article" date="2000" name="Nature">
        <title>Sequence and analysis of chromosome 1 of the plant Arabidopsis thaliana.</title>
        <authorList>
            <person name="Theologis A."/>
            <person name="Ecker J.R."/>
            <person name="Palm C.J."/>
            <person name="Federspiel N.A."/>
            <person name="Kaul S."/>
            <person name="White O."/>
            <person name="Alonso J."/>
            <person name="Altafi H."/>
            <person name="Araujo R."/>
            <person name="Bowman C.L."/>
            <person name="Brooks S.Y."/>
            <person name="Buehler E."/>
            <person name="Chan A."/>
            <person name="Chao Q."/>
            <person name="Chen H."/>
            <person name="Cheuk R.F."/>
            <person name="Chin C.W."/>
            <person name="Chung M.K."/>
            <person name="Conn L."/>
            <person name="Conway A.B."/>
            <person name="Conway A.R."/>
            <person name="Creasy T.H."/>
            <person name="Dewar K."/>
            <person name="Dunn P."/>
            <person name="Etgu P."/>
            <person name="Feldblyum T.V."/>
            <person name="Feng J.-D."/>
            <person name="Fong B."/>
            <person name="Fujii C.Y."/>
            <person name="Gill J.E."/>
            <person name="Goldsmith A.D."/>
            <person name="Haas B."/>
            <person name="Hansen N.F."/>
            <person name="Hughes B."/>
            <person name="Huizar L."/>
            <person name="Hunter J.L."/>
            <person name="Jenkins J."/>
            <person name="Johnson-Hopson C."/>
            <person name="Khan S."/>
            <person name="Khaykin E."/>
            <person name="Kim C.J."/>
            <person name="Koo H.L."/>
            <person name="Kremenetskaia I."/>
            <person name="Kurtz D.B."/>
            <person name="Kwan A."/>
            <person name="Lam B."/>
            <person name="Langin-Hooper S."/>
            <person name="Lee A."/>
            <person name="Lee J.M."/>
            <person name="Lenz C.A."/>
            <person name="Li J.H."/>
            <person name="Li Y.-P."/>
            <person name="Lin X."/>
            <person name="Liu S.X."/>
            <person name="Liu Z.A."/>
            <person name="Luros J.S."/>
            <person name="Maiti R."/>
            <person name="Marziali A."/>
            <person name="Militscher J."/>
            <person name="Miranda M."/>
            <person name="Nguyen M."/>
            <person name="Nierman W.C."/>
            <person name="Osborne B.I."/>
            <person name="Pai G."/>
            <person name="Peterson J."/>
            <person name="Pham P.K."/>
            <person name="Rizzo M."/>
            <person name="Rooney T."/>
            <person name="Rowley D."/>
            <person name="Sakano H."/>
            <person name="Salzberg S.L."/>
            <person name="Schwartz J.R."/>
            <person name="Shinn P."/>
            <person name="Southwick A.M."/>
            <person name="Sun H."/>
            <person name="Tallon L.J."/>
            <person name="Tambunga G."/>
            <person name="Toriumi M.J."/>
            <person name="Town C.D."/>
            <person name="Utterback T."/>
            <person name="Van Aken S."/>
            <person name="Vaysberg M."/>
            <person name="Vysotskaia V.S."/>
            <person name="Walker M."/>
            <person name="Wu D."/>
            <person name="Yu G."/>
            <person name="Fraser C.M."/>
            <person name="Venter J.C."/>
            <person name="Davis R.W."/>
        </authorList>
    </citation>
    <scope>NUCLEOTIDE SEQUENCE [LARGE SCALE GENOMIC DNA]</scope>
    <source>
        <strain>cv. Columbia</strain>
    </source>
</reference>
<reference key="2">
    <citation type="journal article" date="2017" name="Plant J.">
        <title>Araport11: a complete reannotation of the Arabidopsis thaliana reference genome.</title>
        <authorList>
            <person name="Cheng C.Y."/>
            <person name="Krishnakumar V."/>
            <person name="Chan A.P."/>
            <person name="Thibaud-Nissen F."/>
            <person name="Schobel S."/>
            <person name="Town C.D."/>
        </authorList>
    </citation>
    <scope>GENOME REANNOTATION</scope>
    <source>
        <strain>cv. Columbia</strain>
    </source>
</reference>
<reference key="3">
    <citation type="journal article" date="2002" name="Science">
        <title>Functional annotation of a full-length Arabidopsis cDNA collection.</title>
        <authorList>
            <person name="Seki M."/>
            <person name="Narusaka M."/>
            <person name="Kamiya A."/>
            <person name="Ishida J."/>
            <person name="Satou M."/>
            <person name="Sakurai T."/>
            <person name="Nakajima M."/>
            <person name="Enju A."/>
            <person name="Akiyama K."/>
            <person name="Oono Y."/>
            <person name="Muramatsu M."/>
            <person name="Hayashizaki Y."/>
            <person name="Kawai J."/>
            <person name="Carninci P."/>
            <person name="Itoh M."/>
            <person name="Ishii Y."/>
            <person name="Arakawa T."/>
            <person name="Shibata K."/>
            <person name="Shinagawa A."/>
            <person name="Shinozaki K."/>
        </authorList>
    </citation>
    <scope>NUCLEOTIDE SEQUENCE [LARGE SCALE MRNA] OF 26-467</scope>
    <source>
        <strain>cv. Columbia</strain>
    </source>
</reference>
<reference key="4">
    <citation type="journal article" date="2001" name="J. Biol. Chem.">
        <title>Phylogenetic analysis of the UDP-glycosyltransferase multigene family of Arabidopsis thaliana.</title>
        <authorList>
            <person name="Li Y."/>
            <person name="Baldauf S."/>
            <person name="Lim E.K."/>
            <person name="Bowles D.J."/>
        </authorList>
    </citation>
    <scope>GENE FAMILY</scope>
</reference>